<sequence>MGLSEGEWQLVLXXXXKVEADLAGHGQDVLIRLFKGHPETLEKFDKFKHLKTXXXMKASEDLKKHGNTVLTALGGILKKKGHHEAELKPLAQSHATKHKIPIKYLXXXXEAIIHVLHSRHPAEFGADAQGAMNKALELFRKDIAAKYKELGFHG</sequence>
<dbReference type="EC" id="1.7.-.-" evidence="1"/>
<dbReference type="EC" id="1.11.1.-" evidence="1"/>
<dbReference type="FunCoup" id="P83682">
    <property type="interactions" value="117"/>
</dbReference>
<dbReference type="MINT" id="P83682"/>
<dbReference type="STRING" id="9749.P83682"/>
<dbReference type="InParanoid" id="P83682"/>
<dbReference type="Proteomes" id="UP000248483">
    <property type="component" value="Unplaced"/>
</dbReference>
<dbReference type="GO" id="GO:0070062">
    <property type="term" value="C:extracellular exosome"/>
    <property type="evidence" value="ECO:0007669"/>
    <property type="project" value="TreeGrafter"/>
</dbReference>
<dbReference type="GO" id="GO:0016528">
    <property type="term" value="C:sarcoplasm"/>
    <property type="evidence" value="ECO:0000250"/>
    <property type="project" value="UniProtKB"/>
</dbReference>
<dbReference type="GO" id="GO:0020037">
    <property type="term" value="F:heme binding"/>
    <property type="evidence" value="ECO:0007669"/>
    <property type="project" value="InterPro"/>
</dbReference>
<dbReference type="GO" id="GO:0046872">
    <property type="term" value="F:metal ion binding"/>
    <property type="evidence" value="ECO:0007669"/>
    <property type="project" value="UniProtKB-KW"/>
</dbReference>
<dbReference type="GO" id="GO:0098809">
    <property type="term" value="F:nitrite reductase activity"/>
    <property type="evidence" value="ECO:0000250"/>
    <property type="project" value="UniProtKB"/>
</dbReference>
<dbReference type="GO" id="GO:0019825">
    <property type="term" value="F:oxygen binding"/>
    <property type="evidence" value="ECO:0007669"/>
    <property type="project" value="InterPro"/>
</dbReference>
<dbReference type="GO" id="GO:0005344">
    <property type="term" value="F:oxygen carrier activity"/>
    <property type="evidence" value="ECO:0000250"/>
    <property type="project" value="UniProtKB"/>
</dbReference>
<dbReference type="GO" id="GO:0004601">
    <property type="term" value="F:peroxidase activity"/>
    <property type="evidence" value="ECO:0000250"/>
    <property type="project" value="UniProtKB"/>
</dbReference>
<dbReference type="GO" id="GO:0019430">
    <property type="term" value="P:removal of superoxide radicals"/>
    <property type="evidence" value="ECO:0000250"/>
    <property type="project" value="UniProtKB"/>
</dbReference>
<dbReference type="Gene3D" id="6.10.140.2100">
    <property type="match status" value="1"/>
</dbReference>
<dbReference type="Gene3D" id="6.10.140.2110">
    <property type="match status" value="1"/>
</dbReference>
<dbReference type="InterPro" id="IPR000971">
    <property type="entry name" value="Globin"/>
</dbReference>
<dbReference type="InterPro" id="IPR009050">
    <property type="entry name" value="Globin-like_sf"/>
</dbReference>
<dbReference type="InterPro" id="IPR002335">
    <property type="entry name" value="Myoglobin"/>
</dbReference>
<dbReference type="PANTHER" id="PTHR47132">
    <property type="entry name" value="MYOGLOBIN"/>
    <property type="match status" value="1"/>
</dbReference>
<dbReference type="PANTHER" id="PTHR47132:SF1">
    <property type="entry name" value="MYOGLOBIN"/>
    <property type="match status" value="1"/>
</dbReference>
<dbReference type="Pfam" id="PF00042">
    <property type="entry name" value="Globin"/>
    <property type="match status" value="1"/>
</dbReference>
<dbReference type="PRINTS" id="PR00613">
    <property type="entry name" value="MYOGLOBIN"/>
</dbReference>
<dbReference type="SUPFAM" id="SSF46458">
    <property type="entry name" value="Globin-like"/>
    <property type="match status" value="1"/>
</dbReference>
<dbReference type="PROSITE" id="PS01033">
    <property type="entry name" value="GLOBIN"/>
    <property type="match status" value="1"/>
</dbReference>
<name>MYG_DELLE</name>
<comment type="function">
    <text evidence="1 7">Monomeric heme protein which primary function is to store oxygen and facilitate its diffusion within muscle tissues. Reversibly binds oxygen through a pentacoordinated heme iron and enables its timely and efficient release as needed during periods of heightened demand (PubMed:15050527). Depending on the oxidative conditions of tissues and cells, and in addition to its ability to bind oxygen, it also has a nitrite reductase activity whereby it regulates the production of bioactive nitric oxide. Under stress conditions, like hypoxia and anoxia, it also protects cells against reactive oxygen species thanks to its pseudoperoxidase activity (By similarity).</text>
</comment>
<comment type="catalytic activity">
    <reaction evidence="1">
        <text>Fe(III)-heme b-[protein] + nitric oxide + H2O = Fe(II)-heme b-[protein] + nitrite + 2 H(+)</text>
        <dbReference type="Rhea" id="RHEA:77711"/>
        <dbReference type="Rhea" id="RHEA-COMP:18975"/>
        <dbReference type="Rhea" id="RHEA-COMP:18976"/>
        <dbReference type="ChEBI" id="CHEBI:15377"/>
        <dbReference type="ChEBI" id="CHEBI:15378"/>
        <dbReference type="ChEBI" id="CHEBI:16301"/>
        <dbReference type="ChEBI" id="CHEBI:16480"/>
        <dbReference type="ChEBI" id="CHEBI:55376"/>
        <dbReference type="ChEBI" id="CHEBI:60344"/>
    </reaction>
    <physiologicalReaction direction="right-to-left" evidence="1">
        <dbReference type="Rhea" id="RHEA:77713"/>
    </physiologicalReaction>
</comment>
<comment type="catalytic activity">
    <reaction evidence="1">
        <text>H2O2 + AH2 = A + 2 H2O</text>
        <dbReference type="Rhea" id="RHEA:30275"/>
        <dbReference type="ChEBI" id="CHEBI:13193"/>
        <dbReference type="ChEBI" id="CHEBI:15377"/>
        <dbReference type="ChEBI" id="CHEBI:16240"/>
        <dbReference type="ChEBI" id="CHEBI:17499"/>
    </reaction>
</comment>
<comment type="subunit">
    <text evidence="7">Monomer.</text>
</comment>
<comment type="subcellular location">
    <subcellularLocation>
        <location evidence="1">Cytoplasm</location>
        <location evidence="1">Sarcoplasm</location>
    </subcellularLocation>
</comment>
<comment type="mass spectrometry"/>
<comment type="similarity">
    <text evidence="6 8">Belongs to the globin family.</text>
</comment>
<accession>P83682</accession>
<proteinExistence type="evidence at protein level"/>
<evidence type="ECO:0000250" key="1">
    <source>
        <dbReference type="UniProtKB" id="P02144"/>
    </source>
</evidence>
<evidence type="ECO:0000250" key="2">
    <source>
        <dbReference type="UniProtKB" id="P02189"/>
    </source>
</evidence>
<evidence type="ECO:0000250" key="3">
    <source>
        <dbReference type="UniProtKB" id="P04247"/>
    </source>
</evidence>
<evidence type="ECO:0000250" key="4">
    <source>
        <dbReference type="UniProtKB" id="P68082"/>
    </source>
</evidence>
<evidence type="ECO:0000250" key="5">
    <source>
        <dbReference type="UniProtKB" id="Q9QZ76"/>
    </source>
</evidence>
<evidence type="ECO:0000255" key="6">
    <source>
        <dbReference type="PROSITE-ProRule" id="PRU00238"/>
    </source>
</evidence>
<evidence type="ECO:0000269" key="7">
    <source>
    </source>
</evidence>
<evidence type="ECO:0000305" key="8"/>
<protein>
    <recommendedName>
        <fullName>Myoglobin</fullName>
    </recommendedName>
    <alternativeName>
        <fullName evidence="1">Nitrite reductase MB</fullName>
        <ecNumber evidence="1">1.7.-.-</ecNumber>
    </alternativeName>
    <alternativeName>
        <fullName evidence="1">Pseudoperoxidase MB</fullName>
        <ecNumber evidence="1">1.11.1.-</ecNumber>
    </alternativeName>
</protein>
<gene>
    <name type="primary">MB</name>
</gene>
<reference key="1">
    <citation type="journal article" date="2004" name="Comp. Biochem. Physiol.">
        <title>Unusually weak oxygen binding, physical properties, partial sequence, autoxidation rate and a potential phosphorylation site of beluga whale (Delphinapterus leucas) myoglobin.</title>
        <authorList>
            <person name="Stewart J.M."/>
            <person name="Blakely J.A."/>
            <person name="Karpowicz P.A."/>
            <person name="Kalanxhi E."/>
            <person name="Thatcher B.J."/>
            <person name="Martin B.M."/>
        </authorList>
    </citation>
    <scope>PROTEIN SEQUENCE OF 2-154</scope>
    <scope>FUNCTION</scope>
    <scope>SUBUNIT</scope>
    <scope>MASS SPECTROMETRY</scope>
    <source>
        <tissue>Muscle</tissue>
    </source>
</reference>
<keyword id="KW-0963">Cytoplasm</keyword>
<keyword id="KW-0903">Direct protein sequencing</keyword>
<keyword id="KW-0349">Heme</keyword>
<keyword id="KW-0408">Iron</keyword>
<keyword id="KW-0479">Metal-binding</keyword>
<keyword id="KW-0514">Muscle protein</keyword>
<keyword id="KW-0560">Oxidoreductase</keyword>
<keyword id="KW-0561">Oxygen transport</keyword>
<keyword id="KW-0597">Phosphoprotein</keyword>
<keyword id="KW-1185">Reference proteome</keyword>
<keyword id="KW-0813">Transport</keyword>
<feature type="initiator methionine" description="Removed" evidence="7">
    <location>
        <position position="1"/>
    </location>
</feature>
<feature type="chain" id="PRO_0000053288" description="Myoglobin">
    <location>
        <begin position="2"/>
        <end position="154"/>
    </location>
</feature>
<feature type="domain" description="Globin" evidence="6">
    <location>
        <begin position="2"/>
        <end position="148"/>
    </location>
</feature>
<feature type="binding site" evidence="4">
    <location>
        <position position="65"/>
    </location>
    <ligand>
        <name>nitrite</name>
        <dbReference type="ChEBI" id="CHEBI:16301"/>
    </ligand>
</feature>
<feature type="binding site" evidence="2 6">
    <location>
        <position position="65"/>
    </location>
    <ligand>
        <name>O2</name>
        <dbReference type="ChEBI" id="CHEBI:15379"/>
    </ligand>
</feature>
<feature type="binding site" description="proximal binding residue" evidence="1">
    <location>
        <position position="94"/>
    </location>
    <ligand>
        <name>heme b</name>
        <dbReference type="ChEBI" id="CHEBI:60344"/>
    </ligand>
    <ligandPart>
        <name>Fe</name>
        <dbReference type="ChEBI" id="CHEBI:18248"/>
    </ligandPart>
</feature>
<feature type="modified residue" description="Phosphoserine" evidence="5">
    <location>
        <position position="4"/>
    </location>
</feature>
<feature type="modified residue" description="Phosphothreonine" evidence="3">
    <location>
        <position position="68"/>
    </location>
</feature>
<organism evidence="8">
    <name type="scientific">Delphinapterus leucas</name>
    <name type="common">Beluga whale</name>
    <dbReference type="NCBI Taxonomy" id="9749"/>
    <lineage>
        <taxon>Eukaryota</taxon>
        <taxon>Metazoa</taxon>
        <taxon>Chordata</taxon>
        <taxon>Craniata</taxon>
        <taxon>Vertebrata</taxon>
        <taxon>Euteleostomi</taxon>
        <taxon>Mammalia</taxon>
        <taxon>Eutheria</taxon>
        <taxon>Laurasiatheria</taxon>
        <taxon>Artiodactyla</taxon>
        <taxon>Whippomorpha</taxon>
        <taxon>Cetacea</taxon>
        <taxon>Odontoceti</taxon>
        <taxon>Monodontidae</taxon>
        <taxon>Delphinapterus</taxon>
    </lineage>
</organism>